<gene>
    <name type="ordered locus">bbp_532</name>
</gene>
<organism>
    <name type="scientific">Buchnera aphidicola subsp. Baizongia pistaciae (strain Bp)</name>
    <dbReference type="NCBI Taxonomy" id="224915"/>
    <lineage>
        <taxon>Bacteria</taxon>
        <taxon>Pseudomonadati</taxon>
        <taxon>Pseudomonadota</taxon>
        <taxon>Gammaproteobacteria</taxon>
        <taxon>Enterobacterales</taxon>
        <taxon>Erwiniaceae</taxon>
        <taxon>Buchnera</taxon>
    </lineage>
</organism>
<evidence type="ECO:0000255" key="1"/>
<evidence type="ECO:0000305" key="2"/>
<protein>
    <recommendedName>
        <fullName>Uncharacterized transporter bbp_532</fullName>
    </recommendedName>
</protein>
<keyword id="KW-1003">Cell membrane</keyword>
<keyword id="KW-0472">Membrane</keyword>
<keyword id="KW-1185">Reference proteome</keyword>
<keyword id="KW-0812">Transmembrane</keyword>
<keyword id="KW-1133">Transmembrane helix</keyword>
<keyword id="KW-0813">Transport</keyword>
<sequence length="403" mass="44837">MQLKIYSSNKNYIQRGTKAFTEVTIAFFLAGFSTFSTLYCVQPILFLFSKEFSLNPAQSSLSLSASTAMMAFGMLFTGPLSDSIGRKVVMSSSLFLASFCTFCCSNMNSWESIIFMRALTGLALSGVAAVAMTYLSEEMHPSVLSFSIGLYISGNTIGGFLGRFLSSLFSEYFSWNIALEFISFLAFTSAVLFVYLLPKSKNFCSSPLDLRKILLYFIFQWRDPVLSKLFFMGCILMGSFITLFNYVGYRLISQPFFLGQTTIGLLSIIYLIGVYSSPQAGVLIERYRKGVILTLALTMMIFGVLITQCNIVLLIIVGLTLFAAGFFAAHSVTSTWISQCSKINKGSTSSIYLFSYYLGSSIFGTFSGIFWITEKWLGISIFIITFLCIGILLSIRLLQYKNI</sequence>
<proteinExistence type="inferred from homology"/>
<dbReference type="EMBL" id="AE016826">
    <property type="protein sequence ID" value="AAO27234.1"/>
    <property type="molecule type" value="Genomic_DNA"/>
</dbReference>
<dbReference type="RefSeq" id="WP_011091635.1">
    <property type="nucleotide sequence ID" value="NC_004545.1"/>
</dbReference>
<dbReference type="SMR" id="Q89A23"/>
<dbReference type="STRING" id="224915.bbp_532"/>
<dbReference type="KEGG" id="bab:bbp_532"/>
<dbReference type="eggNOG" id="COG2814">
    <property type="taxonomic scope" value="Bacteria"/>
</dbReference>
<dbReference type="HOGENOM" id="CLU_001265_19_3_6"/>
<dbReference type="OrthoDB" id="63984at2"/>
<dbReference type="Proteomes" id="UP000000601">
    <property type="component" value="Chromosome"/>
</dbReference>
<dbReference type="GO" id="GO:0005886">
    <property type="term" value="C:plasma membrane"/>
    <property type="evidence" value="ECO:0007669"/>
    <property type="project" value="UniProtKB-SubCell"/>
</dbReference>
<dbReference type="GO" id="GO:0022857">
    <property type="term" value="F:transmembrane transporter activity"/>
    <property type="evidence" value="ECO:0007669"/>
    <property type="project" value="InterPro"/>
</dbReference>
<dbReference type="CDD" id="cd17324">
    <property type="entry name" value="MFS_NepI_like"/>
    <property type="match status" value="1"/>
</dbReference>
<dbReference type="Gene3D" id="1.20.1250.20">
    <property type="entry name" value="MFS general substrate transporter like domains"/>
    <property type="match status" value="1"/>
</dbReference>
<dbReference type="InterPro" id="IPR011701">
    <property type="entry name" value="MFS"/>
</dbReference>
<dbReference type="InterPro" id="IPR020846">
    <property type="entry name" value="MFS_dom"/>
</dbReference>
<dbReference type="InterPro" id="IPR036259">
    <property type="entry name" value="MFS_trans_sf"/>
</dbReference>
<dbReference type="InterPro" id="IPR005829">
    <property type="entry name" value="Sugar_transporter_CS"/>
</dbReference>
<dbReference type="PANTHER" id="PTHR43271">
    <property type="entry name" value="BLL2771 PROTEIN"/>
    <property type="match status" value="1"/>
</dbReference>
<dbReference type="PANTHER" id="PTHR43271:SF1">
    <property type="entry name" value="INNER MEMBRANE TRANSPORT PROTEIN YNFM"/>
    <property type="match status" value="1"/>
</dbReference>
<dbReference type="Pfam" id="PF07690">
    <property type="entry name" value="MFS_1"/>
    <property type="match status" value="1"/>
</dbReference>
<dbReference type="SUPFAM" id="SSF103473">
    <property type="entry name" value="MFS general substrate transporter"/>
    <property type="match status" value="1"/>
</dbReference>
<dbReference type="PROSITE" id="PS50850">
    <property type="entry name" value="MFS"/>
    <property type="match status" value="1"/>
</dbReference>
<dbReference type="PROSITE" id="PS00216">
    <property type="entry name" value="SUGAR_TRANSPORT_1"/>
    <property type="match status" value="1"/>
</dbReference>
<feature type="chain" id="PRO_0000173417" description="Uncharacterized transporter bbp_532">
    <location>
        <begin position="1"/>
        <end position="403"/>
    </location>
</feature>
<feature type="transmembrane region" description="Helical" evidence="1">
    <location>
        <begin position="25"/>
        <end position="47"/>
    </location>
</feature>
<feature type="transmembrane region" description="Helical" evidence="1">
    <location>
        <begin position="62"/>
        <end position="81"/>
    </location>
</feature>
<feature type="transmembrane region" description="Helical" evidence="1">
    <location>
        <begin position="88"/>
        <end position="110"/>
    </location>
</feature>
<feature type="transmembrane region" description="Helical" evidence="1">
    <location>
        <begin position="114"/>
        <end position="136"/>
    </location>
</feature>
<feature type="transmembrane region" description="Helical" evidence="1">
    <location>
        <begin position="143"/>
        <end position="165"/>
    </location>
</feature>
<feature type="transmembrane region" description="Helical" evidence="1">
    <location>
        <begin position="175"/>
        <end position="197"/>
    </location>
</feature>
<feature type="transmembrane region" description="Helical" evidence="1">
    <location>
        <begin position="229"/>
        <end position="251"/>
    </location>
</feature>
<feature type="transmembrane region" description="Helical" evidence="1">
    <location>
        <begin position="256"/>
        <end position="278"/>
    </location>
</feature>
<feature type="transmembrane region" description="Helical" evidence="1">
    <location>
        <begin position="290"/>
        <end position="307"/>
    </location>
</feature>
<feature type="transmembrane region" description="Helical" evidence="1">
    <location>
        <begin position="311"/>
        <end position="330"/>
    </location>
</feature>
<feature type="transmembrane region" description="Helical" evidence="1">
    <location>
        <begin position="350"/>
        <end position="372"/>
    </location>
</feature>
<feature type="transmembrane region" description="Helical" evidence="1">
    <location>
        <begin position="376"/>
        <end position="398"/>
    </location>
</feature>
<comment type="subcellular location">
    <subcellularLocation>
        <location evidence="2">Cell membrane</location>
        <topology evidence="2">Multi-pass membrane protein</topology>
    </subcellularLocation>
</comment>
<comment type="similarity">
    <text evidence="2">Belongs to the major facilitator superfamily.</text>
</comment>
<name>Y532_BUCBP</name>
<accession>Q89A23</accession>
<reference key="1">
    <citation type="journal article" date="2003" name="Proc. Natl. Acad. Sci. U.S.A.">
        <title>Reductive genome evolution in Buchnera aphidicola.</title>
        <authorList>
            <person name="van Ham R.C.H.J."/>
            <person name="Kamerbeek J."/>
            <person name="Palacios C."/>
            <person name="Rausell C."/>
            <person name="Abascal F."/>
            <person name="Bastolla U."/>
            <person name="Fernandez J.M."/>
            <person name="Jimenez L."/>
            <person name="Postigo M."/>
            <person name="Silva F.J."/>
            <person name="Tamames J."/>
            <person name="Viguera E."/>
            <person name="Latorre A."/>
            <person name="Valencia A."/>
            <person name="Moran F."/>
            <person name="Moya A."/>
        </authorList>
    </citation>
    <scope>NUCLEOTIDE SEQUENCE [LARGE SCALE GENOMIC DNA]</scope>
    <source>
        <strain>Bp</strain>
    </source>
</reference>